<dbReference type="EC" id="3.6.1.27" evidence="1"/>
<dbReference type="EMBL" id="AE009441">
    <property type="protein sequence ID" value="AAL62872.1"/>
    <property type="molecule type" value="Genomic_DNA"/>
</dbReference>
<dbReference type="RefSeq" id="WP_011007344.1">
    <property type="nucleotide sequence ID" value="NC_003364.1"/>
</dbReference>
<dbReference type="SMR" id="Q8ZYX0"/>
<dbReference type="STRING" id="178306.PAE0576"/>
<dbReference type="EnsemblBacteria" id="AAL62872">
    <property type="protein sequence ID" value="AAL62872"/>
    <property type="gene ID" value="PAE0576"/>
</dbReference>
<dbReference type="GeneID" id="1465095"/>
<dbReference type="KEGG" id="pai:PAE0576"/>
<dbReference type="PATRIC" id="fig|178306.9.peg.414"/>
<dbReference type="eggNOG" id="arCOG04761">
    <property type="taxonomic scope" value="Archaea"/>
</dbReference>
<dbReference type="HOGENOM" id="CLU_060296_1_2_2"/>
<dbReference type="InParanoid" id="Q8ZYX0"/>
<dbReference type="Proteomes" id="UP000002439">
    <property type="component" value="Chromosome"/>
</dbReference>
<dbReference type="GO" id="GO:0005886">
    <property type="term" value="C:plasma membrane"/>
    <property type="evidence" value="ECO:0000318"/>
    <property type="project" value="GO_Central"/>
</dbReference>
<dbReference type="GO" id="GO:0050380">
    <property type="term" value="F:undecaprenyl-diphosphatase activity"/>
    <property type="evidence" value="ECO:0000318"/>
    <property type="project" value="GO_Central"/>
</dbReference>
<dbReference type="GO" id="GO:0000270">
    <property type="term" value="P:peptidoglycan metabolic process"/>
    <property type="evidence" value="ECO:0000318"/>
    <property type="project" value="GO_Central"/>
</dbReference>
<dbReference type="HAMAP" id="MF_01006">
    <property type="entry name" value="Undec_diphosphatase"/>
    <property type="match status" value="1"/>
</dbReference>
<dbReference type="InterPro" id="IPR003824">
    <property type="entry name" value="UppP"/>
</dbReference>
<dbReference type="PANTHER" id="PTHR30622">
    <property type="entry name" value="UNDECAPRENYL-DIPHOSPHATASE"/>
    <property type="match status" value="1"/>
</dbReference>
<dbReference type="PANTHER" id="PTHR30622:SF2">
    <property type="entry name" value="UNDECAPRENYL-DIPHOSPHATASE"/>
    <property type="match status" value="1"/>
</dbReference>
<dbReference type="Pfam" id="PF02673">
    <property type="entry name" value="BacA"/>
    <property type="match status" value="1"/>
</dbReference>
<dbReference type="PRINTS" id="PR00173">
    <property type="entry name" value="EDTRNSPORT"/>
</dbReference>
<feature type="chain" id="PRO_0000151253" description="Undecaprenyl-diphosphatase">
    <location>
        <begin position="1"/>
        <end position="266"/>
    </location>
</feature>
<feature type="transmembrane region" description="Helical" evidence="1">
    <location>
        <begin position="41"/>
        <end position="61"/>
    </location>
</feature>
<feature type="transmembrane region" description="Helical" evidence="1">
    <location>
        <begin position="82"/>
        <end position="102"/>
    </location>
</feature>
<feature type="transmembrane region" description="Helical" evidence="1">
    <location>
        <begin position="106"/>
        <end position="126"/>
    </location>
</feature>
<feature type="transmembrane region" description="Helical" evidence="1">
    <location>
        <begin position="159"/>
        <end position="179"/>
    </location>
</feature>
<feature type="transmembrane region" description="Helical" evidence="1">
    <location>
        <begin position="191"/>
        <end position="211"/>
    </location>
</feature>
<feature type="transmembrane region" description="Helical" evidence="1">
    <location>
        <begin position="213"/>
        <end position="233"/>
    </location>
</feature>
<feature type="transmembrane region" description="Helical" evidence="1">
    <location>
        <begin position="246"/>
        <end position="266"/>
    </location>
</feature>
<comment type="function">
    <text evidence="1">Catalyzes the dephosphorylation of undecaprenyl diphosphate (UPP).</text>
</comment>
<comment type="catalytic activity">
    <reaction evidence="1">
        <text>di-trans,octa-cis-undecaprenyl diphosphate + H2O = di-trans,octa-cis-undecaprenyl phosphate + phosphate + H(+)</text>
        <dbReference type="Rhea" id="RHEA:28094"/>
        <dbReference type="ChEBI" id="CHEBI:15377"/>
        <dbReference type="ChEBI" id="CHEBI:15378"/>
        <dbReference type="ChEBI" id="CHEBI:43474"/>
        <dbReference type="ChEBI" id="CHEBI:58405"/>
        <dbReference type="ChEBI" id="CHEBI:60392"/>
        <dbReference type="EC" id="3.6.1.27"/>
    </reaction>
</comment>
<comment type="subcellular location">
    <subcellularLocation>
        <location evidence="1">Cell membrane</location>
        <topology evidence="1">Multi-pass membrane protein</topology>
    </subcellularLocation>
</comment>
<comment type="similarity">
    <text evidence="1">Belongs to the UppP family.</text>
</comment>
<protein>
    <recommendedName>
        <fullName evidence="1">Undecaprenyl-diphosphatase</fullName>
        <ecNumber evidence="1">3.6.1.27</ecNumber>
    </recommendedName>
    <alternativeName>
        <fullName evidence="1">Undecaprenyl pyrophosphate phosphatase</fullName>
    </alternativeName>
</protein>
<reference key="1">
    <citation type="journal article" date="2002" name="Proc. Natl. Acad. Sci. U.S.A.">
        <title>Genome sequence of the hyperthermophilic crenarchaeon Pyrobaculum aerophilum.</title>
        <authorList>
            <person name="Fitz-Gibbon S.T."/>
            <person name="Ladner H."/>
            <person name="Kim U.-J."/>
            <person name="Stetter K.O."/>
            <person name="Simon M.I."/>
            <person name="Miller J.H."/>
        </authorList>
    </citation>
    <scope>NUCLEOTIDE SEQUENCE [LARGE SCALE GENOMIC DNA]</scope>
    <source>
        <strain>ATCC 51768 / DSM 7523 / JCM 9630 / CIP 104966 / NBRC 100827 / IM2</strain>
    </source>
</reference>
<name>UPPP_PYRAE</name>
<gene>
    <name evidence="1" type="primary">uppP</name>
    <name type="synonym">bacA</name>
    <name type="synonym">upk</name>
    <name type="ordered locus">PAE0576</name>
</gene>
<accession>Q8ZYX0</accession>
<evidence type="ECO:0000255" key="1">
    <source>
        <dbReference type="HAMAP-Rule" id="MF_01006"/>
    </source>
</evidence>
<proteinExistence type="inferred from homology"/>
<organism>
    <name type="scientific">Pyrobaculum aerophilum (strain ATCC 51768 / DSM 7523 / JCM 9630 / CIP 104966 / NBRC 100827 / IM2)</name>
    <dbReference type="NCBI Taxonomy" id="178306"/>
    <lineage>
        <taxon>Archaea</taxon>
        <taxon>Thermoproteota</taxon>
        <taxon>Thermoprotei</taxon>
        <taxon>Thermoproteales</taxon>
        <taxon>Thermoproteaceae</taxon>
        <taxon>Pyrobaculum</taxon>
    </lineage>
</organism>
<keyword id="KW-1003">Cell membrane</keyword>
<keyword id="KW-0378">Hydrolase</keyword>
<keyword id="KW-0472">Membrane</keyword>
<keyword id="KW-1185">Reference proteome</keyword>
<keyword id="KW-0812">Transmembrane</keyword>
<keyword id="KW-1133">Transmembrane helix</keyword>
<sequence length="266" mass="28045">MDLGVAAILGVVQGISEWLPISSKTQIMLVSIWLLNASPEYAYSLGLFLEAASVLAALIYFRGVYLKALRGFVGDAEGRRWLVYILVTTLVTAVVGLPLYYVARKWLVVGHSAGFLMIVLGLAVVLNAVFLQRARFSAGLKAFDNMSLRDMAIVGIAQAVSVLPGLSRSGATVTALLLLGYKPEEAFRASFVLVPVAGLGATALAYLSEGGAVATAEALLAMAIGIVISIITIKALLEFAKSKHVVLVNVVIGLLAIAGGLLRIIF</sequence>